<sequence length="277" mass="30056">MADPWQECMDYAVTLAGQAGEVVREALKNEMNIMVKSSPADLVTATDQKVEKMLITSIKEKYPSHSFIGEESVAAGEKSILTDNPTWIIDPIDGTTNFVHGFPFVAVSIGFVVNKKMEFGIVYSCLEDKMYTGRKGKGAFCNGQKLQVSHQEDITKSLLVTELGSSRTPETVRIILSNIERLLCLPIHGIRGVGTAALNMCLVAAGAADAYYEMGIHCWDVAGAGIIVTEAGGVLLDVTGGPFDLMSRRVIASSNKTLAERIAKEIQIIPLQRDDED</sequence>
<dbReference type="EC" id="3.1.3.25" evidence="3"/>
<dbReference type="EC" id="3.1.3.94" evidence="3"/>
<dbReference type="EMBL" id="J05394">
    <property type="protein sequence ID" value="AAA30589.1"/>
    <property type="molecule type" value="mRNA"/>
</dbReference>
<dbReference type="EMBL" id="BC118411">
    <property type="protein sequence ID" value="AAI18412.1"/>
    <property type="molecule type" value="mRNA"/>
</dbReference>
<dbReference type="PIR" id="A35223">
    <property type="entry name" value="A35223"/>
</dbReference>
<dbReference type="RefSeq" id="NP_776786.1">
    <property type="nucleotide sequence ID" value="NM_174361.4"/>
</dbReference>
<dbReference type="RefSeq" id="XP_005215709.1">
    <property type="nucleotide sequence ID" value="XM_005215652.5"/>
</dbReference>
<dbReference type="RefSeq" id="XP_015330016.1">
    <property type="nucleotide sequence ID" value="XM_015474530.3"/>
</dbReference>
<dbReference type="PDB" id="2BJI">
    <property type="method" value="X-ray"/>
    <property type="resolution" value="1.30 A"/>
    <property type="chains" value="A/B=1-277"/>
</dbReference>
<dbReference type="PDBsum" id="2BJI"/>
<dbReference type="SMR" id="P20456"/>
<dbReference type="FunCoup" id="P20456">
    <property type="interactions" value="1845"/>
</dbReference>
<dbReference type="STRING" id="9913.ENSBTAP00000015548"/>
<dbReference type="BindingDB" id="P20456"/>
<dbReference type="ChEMBL" id="CHEMBL4505"/>
<dbReference type="PaxDb" id="9913-ENSBTAP00000015548"/>
<dbReference type="GeneID" id="281865"/>
<dbReference type="KEGG" id="bta:281865"/>
<dbReference type="CTD" id="3612"/>
<dbReference type="VEuPathDB" id="HostDB:ENSBTAG00000011709"/>
<dbReference type="eggNOG" id="KOG2951">
    <property type="taxonomic scope" value="Eukaryota"/>
</dbReference>
<dbReference type="HOGENOM" id="CLU_044118_1_0_1"/>
<dbReference type="InParanoid" id="P20456"/>
<dbReference type="OMA" id="ERGLHPW"/>
<dbReference type="OrthoDB" id="10254945at2759"/>
<dbReference type="TreeFam" id="TF313194"/>
<dbReference type="BRENDA" id="3.1.3.25">
    <property type="organism ID" value="908"/>
</dbReference>
<dbReference type="Reactome" id="R-BTA-1855183">
    <property type="pathway name" value="Synthesis of IP2, IP, and Ins in the cytosol"/>
</dbReference>
<dbReference type="SABIO-RK" id="P20456"/>
<dbReference type="UniPathway" id="UPA00823">
    <property type="reaction ID" value="UER00788"/>
</dbReference>
<dbReference type="EvolutionaryTrace" id="P20456"/>
<dbReference type="Proteomes" id="UP000009136">
    <property type="component" value="Chromosome 14"/>
</dbReference>
<dbReference type="Bgee" id="ENSBTAG00000011709">
    <property type="expression patterns" value="Expressed in mesenteric lymph node and 103 other cell types or tissues"/>
</dbReference>
<dbReference type="GO" id="GO:0005737">
    <property type="term" value="C:cytoplasm"/>
    <property type="evidence" value="ECO:0007669"/>
    <property type="project" value="UniProtKB-SubCell"/>
</dbReference>
<dbReference type="GO" id="GO:0103026">
    <property type="term" value="F:fructose-1-phosphatase activity"/>
    <property type="evidence" value="ECO:0007669"/>
    <property type="project" value="RHEA"/>
</dbReference>
<dbReference type="GO" id="GO:0008877">
    <property type="term" value="F:glucose-1-phosphatase activity"/>
    <property type="evidence" value="ECO:0007669"/>
    <property type="project" value="RHEA"/>
</dbReference>
<dbReference type="GO" id="GO:0004346">
    <property type="term" value="F:glucose-6-phosphatase activity"/>
    <property type="evidence" value="ECO:0007669"/>
    <property type="project" value="RHEA"/>
</dbReference>
<dbReference type="GO" id="GO:0047954">
    <property type="term" value="F:glycerol-2-phosphatase activity"/>
    <property type="evidence" value="ECO:0007669"/>
    <property type="project" value="RHEA"/>
</dbReference>
<dbReference type="GO" id="GO:0008934">
    <property type="term" value="F:inositol monophosphate 1-phosphatase activity"/>
    <property type="evidence" value="ECO:0000318"/>
    <property type="project" value="GO_Central"/>
</dbReference>
<dbReference type="GO" id="GO:0052832">
    <property type="term" value="F:inositol monophosphate 3-phosphatase activity"/>
    <property type="evidence" value="ECO:0007669"/>
    <property type="project" value="RHEA"/>
</dbReference>
<dbReference type="GO" id="GO:0052833">
    <property type="term" value="F:inositol monophosphate 4-phosphatase activity"/>
    <property type="evidence" value="ECO:0007669"/>
    <property type="project" value="RHEA"/>
</dbReference>
<dbReference type="GO" id="GO:0052834">
    <property type="term" value="F:inositol monophosphate phosphatase activity"/>
    <property type="evidence" value="ECO:0000314"/>
    <property type="project" value="UniProtKB"/>
</dbReference>
<dbReference type="GO" id="GO:0031403">
    <property type="term" value="F:lithium ion binding"/>
    <property type="evidence" value="ECO:0000314"/>
    <property type="project" value="UniProtKB"/>
</dbReference>
<dbReference type="GO" id="GO:0000287">
    <property type="term" value="F:magnesium ion binding"/>
    <property type="evidence" value="ECO:0000314"/>
    <property type="project" value="UniProtKB"/>
</dbReference>
<dbReference type="GO" id="GO:0030145">
    <property type="term" value="F:manganese ion binding"/>
    <property type="evidence" value="ECO:0000314"/>
    <property type="project" value="UniProtKB"/>
</dbReference>
<dbReference type="GO" id="GO:0006021">
    <property type="term" value="P:inositol biosynthetic process"/>
    <property type="evidence" value="ECO:0007669"/>
    <property type="project" value="UniProtKB-UniPathway"/>
</dbReference>
<dbReference type="GO" id="GO:0006020">
    <property type="term" value="P:inositol metabolic process"/>
    <property type="evidence" value="ECO:0000318"/>
    <property type="project" value="GO_Central"/>
</dbReference>
<dbReference type="GO" id="GO:0046854">
    <property type="term" value="P:phosphatidylinositol phosphate biosynthetic process"/>
    <property type="evidence" value="ECO:0007669"/>
    <property type="project" value="InterPro"/>
</dbReference>
<dbReference type="GO" id="GO:0007165">
    <property type="term" value="P:signal transduction"/>
    <property type="evidence" value="ECO:0000318"/>
    <property type="project" value="GO_Central"/>
</dbReference>
<dbReference type="CDD" id="cd01639">
    <property type="entry name" value="IMPase"/>
    <property type="match status" value="1"/>
</dbReference>
<dbReference type="FunFam" id="3.30.540.10:FF:000004">
    <property type="entry name" value="Inositol-1-monophosphatase"/>
    <property type="match status" value="1"/>
</dbReference>
<dbReference type="FunFam" id="3.40.190.80:FF:000002">
    <property type="entry name" value="Inositol-1-monophosphatase"/>
    <property type="match status" value="1"/>
</dbReference>
<dbReference type="Gene3D" id="3.40.190.80">
    <property type="match status" value="1"/>
</dbReference>
<dbReference type="Gene3D" id="3.30.540.10">
    <property type="entry name" value="Fructose-1,6-Bisphosphatase, subunit A, domain 1"/>
    <property type="match status" value="1"/>
</dbReference>
<dbReference type="InterPro" id="IPR033942">
    <property type="entry name" value="IMPase"/>
</dbReference>
<dbReference type="InterPro" id="IPR020583">
    <property type="entry name" value="Inositol_monoP_metal-BS"/>
</dbReference>
<dbReference type="InterPro" id="IPR020552">
    <property type="entry name" value="Inositol_monoPase_Li-sen"/>
</dbReference>
<dbReference type="InterPro" id="IPR000760">
    <property type="entry name" value="Inositol_monophosphatase-like"/>
</dbReference>
<dbReference type="InterPro" id="IPR020550">
    <property type="entry name" value="Inositol_monophosphatase_CS"/>
</dbReference>
<dbReference type="PANTHER" id="PTHR20854">
    <property type="entry name" value="INOSITOL MONOPHOSPHATASE"/>
    <property type="match status" value="1"/>
</dbReference>
<dbReference type="PANTHER" id="PTHR20854:SF26">
    <property type="entry name" value="INOSITOL MONOPHOSPHATASE 1"/>
    <property type="match status" value="1"/>
</dbReference>
<dbReference type="Pfam" id="PF00459">
    <property type="entry name" value="Inositol_P"/>
    <property type="match status" value="1"/>
</dbReference>
<dbReference type="PRINTS" id="PR00377">
    <property type="entry name" value="IMPHPHTASES"/>
</dbReference>
<dbReference type="PRINTS" id="PR00378">
    <property type="entry name" value="LIIMPHPHTASE"/>
</dbReference>
<dbReference type="SUPFAM" id="SSF56655">
    <property type="entry name" value="Carbohydrate phosphatase"/>
    <property type="match status" value="1"/>
</dbReference>
<dbReference type="PROSITE" id="PS00629">
    <property type="entry name" value="IMP_1"/>
    <property type="match status" value="1"/>
</dbReference>
<dbReference type="PROSITE" id="PS00630">
    <property type="entry name" value="IMP_2"/>
    <property type="match status" value="1"/>
</dbReference>
<keyword id="KW-0002">3D-structure</keyword>
<keyword id="KW-0963">Cytoplasm</keyword>
<keyword id="KW-0903">Direct protein sequencing</keyword>
<keyword id="KW-0378">Hydrolase</keyword>
<keyword id="KW-0452">Lithium</keyword>
<keyword id="KW-0460">Magnesium</keyword>
<keyword id="KW-0479">Metal-binding</keyword>
<keyword id="KW-0597">Phosphoprotein</keyword>
<keyword id="KW-1185">Reference proteome</keyword>
<feature type="chain" id="PRO_0000142512" description="Inositol monophosphatase 1">
    <location>
        <begin position="1"/>
        <end position="277"/>
    </location>
</feature>
<feature type="binding site" evidence="2">
    <location>
        <position position="70"/>
    </location>
    <ligand>
        <name>Mg(2+)</name>
        <dbReference type="ChEBI" id="CHEBI:18420"/>
        <label>1</label>
        <note>catalytic</note>
    </ligand>
</feature>
<feature type="binding site" evidence="1">
    <location>
        <position position="70"/>
    </location>
    <ligand>
        <name>substrate</name>
    </ligand>
</feature>
<feature type="binding site" evidence="2">
    <location>
        <position position="90"/>
    </location>
    <ligand>
        <name>Mg(2+)</name>
        <dbReference type="ChEBI" id="CHEBI:18420"/>
        <label>1</label>
        <note>catalytic</note>
    </ligand>
</feature>
<feature type="binding site" evidence="2">
    <location>
        <position position="90"/>
    </location>
    <ligand>
        <name>Mg(2+)</name>
        <dbReference type="ChEBI" id="CHEBI:18420"/>
        <label>2</label>
    </ligand>
</feature>
<feature type="binding site" evidence="1">
    <location>
        <begin position="92"/>
        <end position="95"/>
    </location>
    <ligand>
        <name>substrate</name>
    </ligand>
</feature>
<feature type="binding site" evidence="2">
    <location>
        <position position="92"/>
    </location>
    <ligand>
        <name>Mg(2+)</name>
        <dbReference type="ChEBI" id="CHEBI:18420"/>
        <label>1</label>
        <note>catalytic</note>
    </ligand>
</feature>
<feature type="binding site" evidence="2">
    <location>
        <position position="93"/>
    </location>
    <ligand>
        <name>Mg(2+)</name>
        <dbReference type="ChEBI" id="CHEBI:18420"/>
        <label>2</label>
    </ligand>
</feature>
<feature type="binding site" evidence="1">
    <location>
        <begin position="194"/>
        <end position="196"/>
    </location>
    <ligand>
        <name>substrate</name>
    </ligand>
</feature>
<feature type="binding site" evidence="1">
    <location>
        <position position="213"/>
    </location>
    <ligand>
        <name>substrate</name>
    </ligand>
</feature>
<feature type="binding site" evidence="2">
    <location>
        <position position="220"/>
    </location>
    <ligand>
        <name>Mg(2+)</name>
        <dbReference type="ChEBI" id="CHEBI:18420"/>
        <label>2</label>
    </ligand>
</feature>
<feature type="binding site" evidence="1">
    <location>
        <position position="220"/>
    </location>
    <ligand>
        <name>substrate</name>
    </ligand>
</feature>
<feature type="modified residue" description="Phosphothreonine" evidence="1">
    <location>
        <position position="168"/>
    </location>
</feature>
<feature type="helix" evidence="8">
    <location>
        <begin position="4"/>
        <end position="28"/>
    </location>
</feature>
<feature type="strand" evidence="8">
    <location>
        <begin position="33"/>
        <end position="35"/>
    </location>
</feature>
<feature type="strand" evidence="8">
    <location>
        <begin position="42"/>
        <end position="44"/>
    </location>
</feature>
<feature type="helix" evidence="8">
    <location>
        <begin position="45"/>
        <end position="61"/>
    </location>
</feature>
<feature type="strand" evidence="8">
    <location>
        <begin position="65"/>
        <end position="69"/>
    </location>
</feature>
<feature type="helix" evidence="8">
    <location>
        <begin position="70"/>
        <end position="74"/>
    </location>
</feature>
<feature type="strand" evidence="8">
    <location>
        <begin position="86"/>
        <end position="93"/>
    </location>
</feature>
<feature type="helix" evidence="8">
    <location>
        <begin position="95"/>
        <end position="100"/>
    </location>
</feature>
<feature type="strand" evidence="8">
    <location>
        <begin position="106"/>
        <end position="113"/>
    </location>
</feature>
<feature type="strand" evidence="8">
    <location>
        <begin position="116"/>
        <end position="124"/>
    </location>
</feature>
<feature type="turn" evidence="8">
    <location>
        <begin position="125"/>
        <end position="128"/>
    </location>
</feature>
<feature type="strand" evidence="8">
    <location>
        <begin position="129"/>
        <end position="134"/>
    </location>
</feature>
<feature type="turn" evidence="8">
    <location>
        <begin position="135"/>
        <end position="137"/>
    </location>
</feature>
<feature type="strand" evidence="8">
    <location>
        <begin position="138"/>
        <end position="141"/>
    </location>
</feature>
<feature type="helix" evidence="8">
    <location>
        <begin position="154"/>
        <end position="156"/>
    </location>
</feature>
<feature type="strand" evidence="8">
    <location>
        <begin position="158"/>
        <end position="160"/>
    </location>
</feature>
<feature type="helix" evidence="8">
    <location>
        <begin position="169"/>
        <end position="183"/>
    </location>
</feature>
<feature type="turn" evidence="8">
    <location>
        <begin position="184"/>
        <end position="186"/>
    </location>
</feature>
<feature type="strand" evidence="8">
    <location>
        <begin position="188"/>
        <end position="191"/>
    </location>
</feature>
<feature type="helix" evidence="8">
    <location>
        <begin position="196"/>
        <end position="204"/>
    </location>
</feature>
<feature type="strand" evidence="8">
    <location>
        <begin position="207"/>
        <end position="215"/>
    </location>
</feature>
<feature type="helix" evidence="8">
    <location>
        <begin position="218"/>
        <end position="230"/>
    </location>
</feature>
<feature type="strand" evidence="8">
    <location>
        <begin position="234"/>
        <end position="236"/>
    </location>
</feature>
<feature type="strand" evidence="8">
    <location>
        <begin position="240"/>
        <end position="242"/>
    </location>
</feature>
<feature type="strand" evidence="8">
    <location>
        <begin position="247"/>
        <end position="255"/>
    </location>
</feature>
<feature type="helix" evidence="8">
    <location>
        <begin position="256"/>
        <end position="265"/>
    </location>
</feature>
<organism>
    <name type="scientific">Bos taurus</name>
    <name type="common">Bovine</name>
    <dbReference type="NCBI Taxonomy" id="9913"/>
    <lineage>
        <taxon>Eukaryota</taxon>
        <taxon>Metazoa</taxon>
        <taxon>Chordata</taxon>
        <taxon>Craniata</taxon>
        <taxon>Vertebrata</taxon>
        <taxon>Euteleostomi</taxon>
        <taxon>Mammalia</taxon>
        <taxon>Eutheria</taxon>
        <taxon>Laurasiatheria</taxon>
        <taxon>Artiodactyla</taxon>
        <taxon>Ruminantia</taxon>
        <taxon>Pecora</taxon>
        <taxon>Bovidae</taxon>
        <taxon>Bovinae</taxon>
        <taxon>Bos</taxon>
    </lineage>
</organism>
<gene>
    <name type="primary">IMPA1</name>
    <name type="synonym">IMPA</name>
</gene>
<protein>
    <recommendedName>
        <fullName>Inositol monophosphatase 1</fullName>
        <shortName>IMP 1</shortName>
        <shortName>IMPase 1</shortName>
        <ecNumber evidence="3">3.1.3.25</ecNumber>
    </recommendedName>
    <alternativeName>
        <fullName evidence="5">D-galactose 1-phosphate phosphatase</fullName>
        <ecNumber evidence="3">3.1.3.94</ecNumber>
    </alternativeName>
    <alternativeName>
        <fullName>Inositol-1(or 4)-monophosphatase 1</fullName>
    </alternativeName>
    <alternativeName>
        <fullName>Lithium-sensitive myo-inositol monophosphatase A1</fullName>
    </alternativeName>
</protein>
<evidence type="ECO:0000250" key="1">
    <source>
        <dbReference type="UniProtKB" id="P29218"/>
    </source>
</evidence>
<evidence type="ECO:0000269" key="2">
    <source>
    </source>
</evidence>
<evidence type="ECO:0000269" key="3">
    <source>
    </source>
</evidence>
<evidence type="ECO:0000303" key="4">
    <source>
    </source>
</evidence>
<evidence type="ECO:0000303" key="5">
    <source>
    </source>
</evidence>
<evidence type="ECO:0000305" key="6"/>
<evidence type="ECO:0000305" key="7">
    <source>
    </source>
</evidence>
<evidence type="ECO:0007829" key="8">
    <source>
        <dbReference type="PDB" id="2BJI"/>
    </source>
</evidence>
<reference key="1">
    <citation type="journal article" date="1990" name="J. Biol. Chem.">
        <title>Cloning and expression of bovine brain inositol monophosphatase.</title>
        <authorList>
            <person name="Diehl R.E."/>
            <person name="Whiting P."/>
            <person name="Potter J."/>
            <person name="Gee N."/>
            <person name="Ragan C.I."/>
            <person name="Linemeyer D."/>
            <person name="Schoepfer R."/>
            <person name="Bennett C."/>
            <person name="Dixon R.A.F."/>
        </authorList>
    </citation>
    <scope>NUCLEOTIDE SEQUENCE [MRNA]</scope>
    <scope>PARTIAL PROTEIN SEQUENCE</scope>
    <source>
        <tissue>Brain</tissue>
    </source>
</reference>
<reference key="2">
    <citation type="submission" date="2006-06" db="EMBL/GenBank/DDBJ databases">
        <authorList>
            <consortium name="NIH - Mammalian Gene Collection (MGC) project"/>
        </authorList>
    </citation>
    <scope>NUCLEOTIDE SEQUENCE [LARGE SCALE MRNA]</scope>
    <source>
        <strain>Hereford</strain>
        <tissue>Fetal pons</tissue>
    </source>
</reference>
<reference key="3">
    <citation type="journal article" date="1997" name="Brain Res.">
        <title>Brain inositol monophosphatase identified as a galactose 1-phosphatase.</title>
        <authorList>
            <person name="Parthasarathy R."/>
            <person name="Parthasarathy L."/>
            <person name="Vadnal R."/>
        </authorList>
    </citation>
    <scope>FUNCTION</scope>
    <scope>CATALYTIC ACTIVITY</scope>
    <scope>COFACTOR</scope>
    <scope>ACTIVITY REGULATION</scope>
    <scope>SUBUNIT</scope>
</reference>
<reference key="4">
    <citation type="journal article" date="2005" name="Acta Crystallogr. D">
        <title>High-resolution structure of myo-inositol monophosphatase, the putative target of lithium therapy.</title>
        <authorList>
            <person name="Gill R."/>
            <person name="Mohammed F."/>
            <person name="Badyal R."/>
            <person name="Coates L."/>
            <person name="Erskine P."/>
            <person name="Thompson D."/>
            <person name="Cooper J."/>
            <person name="Gore M."/>
            <person name="Wood S."/>
        </authorList>
    </citation>
    <scope>X-RAY CRYSTALLOGRAPHY (1.3 ANGSTROMS) IN COMPLEX WITH MAGNESIUM IONS</scope>
    <scope>COFACTOR</scope>
    <scope>SUBUNIT</scope>
</reference>
<accession>P20456</accession>
<accession>Q17QE4</accession>
<proteinExistence type="evidence at protein level"/>
<comment type="function">
    <text evidence="1 3">Phosphatase involved in the dephosphorylation of myo-inositol monophosphate to generate myo-inositol (PubMed:9462881). Is also able to dephosphorylate scyllo-inositol-phosphate, myo-inositol 1,4-diphosphate, scyllo-inositol-1,3-diphosphate and scyllo-inositol-1,4-diphosphate (By similarity). Also dephosphorylates in vitro other sugar-phosphates including D-galactose-1-phosphate, glucose-1-phosphate, glucose-6-phosphate, fructose-1-phosphate, beta-glycerophosphate and 2'-AMP (PubMed:9462881). Responsible for the provision of inositol required for synthesis of phosphatidylinositol and polyphosphoinositides, and involved in maintaining normal brain function. Has been implicated as the pharmacological target for lithium Li(+) action in brain (By similarity). Is equally active with myo-inositol monophosphate and D-galactose 1-phosphate (PubMed:9462881).</text>
</comment>
<comment type="catalytic activity">
    <reaction evidence="3">
        <text>a myo-inositol phosphate + H2O = myo-inositol + phosphate</text>
        <dbReference type="Rhea" id="RHEA:24056"/>
        <dbReference type="ChEBI" id="CHEBI:15377"/>
        <dbReference type="ChEBI" id="CHEBI:17268"/>
        <dbReference type="ChEBI" id="CHEBI:43474"/>
        <dbReference type="ChEBI" id="CHEBI:84139"/>
        <dbReference type="EC" id="3.1.3.25"/>
    </reaction>
    <physiologicalReaction direction="left-to-right" evidence="7">
        <dbReference type="Rhea" id="RHEA:24057"/>
    </physiologicalReaction>
</comment>
<comment type="catalytic activity">
    <reaction evidence="1">
        <text>1D-myo-inositol 1-phosphate + H2O = myo-inositol + phosphate</text>
        <dbReference type="Rhea" id="RHEA:27670"/>
        <dbReference type="ChEBI" id="CHEBI:15377"/>
        <dbReference type="ChEBI" id="CHEBI:17268"/>
        <dbReference type="ChEBI" id="CHEBI:43474"/>
        <dbReference type="ChEBI" id="CHEBI:58433"/>
        <dbReference type="EC" id="3.1.3.25"/>
    </reaction>
    <physiologicalReaction direction="left-to-right" evidence="1">
        <dbReference type="Rhea" id="RHEA:27671"/>
    </physiologicalReaction>
</comment>
<comment type="catalytic activity">
    <reaction evidence="1">
        <text>1D-myo-inositol 2-phosphate + H2O = myo-inositol + phosphate</text>
        <dbReference type="Rhea" id="RHEA:44152"/>
        <dbReference type="ChEBI" id="CHEBI:15377"/>
        <dbReference type="ChEBI" id="CHEBI:17268"/>
        <dbReference type="ChEBI" id="CHEBI:43474"/>
        <dbReference type="ChEBI" id="CHEBI:84142"/>
        <dbReference type="EC" id="3.1.3.25"/>
    </reaction>
    <physiologicalReaction direction="left-to-right" evidence="1">
        <dbReference type="Rhea" id="RHEA:44153"/>
    </physiologicalReaction>
</comment>
<comment type="catalytic activity">
    <reaction evidence="1">
        <text>1D-myo-inositol 3-phosphate + H2O = myo-inositol + phosphate</text>
        <dbReference type="Rhea" id="RHEA:30739"/>
        <dbReference type="ChEBI" id="CHEBI:15377"/>
        <dbReference type="ChEBI" id="CHEBI:17268"/>
        <dbReference type="ChEBI" id="CHEBI:43474"/>
        <dbReference type="ChEBI" id="CHEBI:58401"/>
        <dbReference type="EC" id="3.1.3.25"/>
    </reaction>
    <physiologicalReaction direction="left-to-right" evidence="1">
        <dbReference type="Rhea" id="RHEA:30740"/>
    </physiologicalReaction>
</comment>
<comment type="catalytic activity">
    <reaction evidence="1">
        <text>1D-myo-inositol 4-phosphate + H2O = myo-inositol + phosphate</text>
        <dbReference type="Rhea" id="RHEA:30735"/>
        <dbReference type="ChEBI" id="CHEBI:15377"/>
        <dbReference type="ChEBI" id="CHEBI:17268"/>
        <dbReference type="ChEBI" id="CHEBI:43474"/>
        <dbReference type="ChEBI" id="CHEBI:58469"/>
        <dbReference type="EC" id="3.1.3.25"/>
    </reaction>
    <physiologicalReaction direction="left-to-right" evidence="1">
        <dbReference type="Rhea" id="RHEA:30736"/>
    </physiologicalReaction>
</comment>
<comment type="catalytic activity">
    <reaction evidence="1">
        <text>1D-myo-inositol 5-phosphate + H2O = myo-inositol + phosphate</text>
        <dbReference type="Rhea" id="RHEA:44156"/>
        <dbReference type="ChEBI" id="CHEBI:15377"/>
        <dbReference type="ChEBI" id="CHEBI:17268"/>
        <dbReference type="ChEBI" id="CHEBI:43474"/>
        <dbReference type="ChEBI" id="CHEBI:84141"/>
        <dbReference type="EC" id="3.1.3.25"/>
    </reaction>
    <physiologicalReaction direction="left-to-right" evidence="1">
        <dbReference type="Rhea" id="RHEA:44157"/>
    </physiologicalReaction>
</comment>
<comment type="catalytic activity">
    <reaction evidence="1">
        <text>1D-myo-inositol 6-phosphate + H2O = myo-inositol + phosphate</text>
        <dbReference type="Rhea" id="RHEA:44160"/>
        <dbReference type="ChEBI" id="CHEBI:15377"/>
        <dbReference type="ChEBI" id="CHEBI:17268"/>
        <dbReference type="ChEBI" id="CHEBI:43474"/>
        <dbReference type="ChEBI" id="CHEBI:64841"/>
        <dbReference type="EC" id="3.1.3.25"/>
    </reaction>
    <physiologicalReaction direction="left-to-right" evidence="1">
        <dbReference type="Rhea" id="RHEA:44161"/>
    </physiologicalReaction>
</comment>
<comment type="catalytic activity">
    <reaction evidence="1">
        <text>scyllo-inositol 1-phosphate + H2O = scyllo-inositol + phosphate</text>
        <dbReference type="Rhea" id="RHEA:82131"/>
        <dbReference type="ChEBI" id="CHEBI:10642"/>
        <dbReference type="ChEBI" id="CHEBI:15377"/>
        <dbReference type="ChEBI" id="CHEBI:43474"/>
        <dbReference type="ChEBI" id="CHEBI:232087"/>
    </reaction>
    <physiologicalReaction direction="left-to-right" evidence="1">
        <dbReference type="Rhea" id="RHEA:82132"/>
    </physiologicalReaction>
</comment>
<comment type="catalytic activity">
    <reaction evidence="3">
        <text>alpha-D-galactose 1-phosphate + H2O = D-galactose + phosphate</text>
        <dbReference type="Rhea" id="RHEA:29315"/>
        <dbReference type="ChEBI" id="CHEBI:4139"/>
        <dbReference type="ChEBI" id="CHEBI:15377"/>
        <dbReference type="ChEBI" id="CHEBI:43474"/>
        <dbReference type="ChEBI" id="CHEBI:58336"/>
        <dbReference type="EC" id="3.1.3.94"/>
    </reaction>
    <physiologicalReaction direction="left-to-right" evidence="7">
        <dbReference type="Rhea" id="RHEA:29316"/>
    </physiologicalReaction>
</comment>
<comment type="catalytic activity">
    <reaction evidence="1">
        <text>alpha-D-glucose 1-phosphate + H2O = D-glucose + phosphate</text>
        <dbReference type="Rhea" id="RHEA:19933"/>
        <dbReference type="ChEBI" id="CHEBI:4167"/>
        <dbReference type="ChEBI" id="CHEBI:15377"/>
        <dbReference type="ChEBI" id="CHEBI:43474"/>
        <dbReference type="ChEBI" id="CHEBI:58601"/>
    </reaction>
    <physiologicalReaction direction="left-to-right" evidence="1">
        <dbReference type="Rhea" id="RHEA:19934"/>
    </physiologicalReaction>
</comment>
<comment type="catalytic activity">
    <reaction evidence="1">
        <text>D-glucose 6-phosphate + H2O = D-glucose + phosphate</text>
        <dbReference type="Rhea" id="RHEA:16689"/>
        <dbReference type="ChEBI" id="CHEBI:4167"/>
        <dbReference type="ChEBI" id="CHEBI:15377"/>
        <dbReference type="ChEBI" id="CHEBI:43474"/>
        <dbReference type="ChEBI" id="CHEBI:61548"/>
    </reaction>
    <physiologicalReaction direction="left-to-right" evidence="1">
        <dbReference type="Rhea" id="RHEA:16690"/>
    </physiologicalReaction>
</comment>
<comment type="catalytic activity">
    <reaction evidence="1">
        <text>beta-D-fructose 1-phosphate + H2O = D-fructose + phosphate</text>
        <dbReference type="Rhea" id="RHEA:35603"/>
        <dbReference type="ChEBI" id="CHEBI:15377"/>
        <dbReference type="ChEBI" id="CHEBI:37721"/>
        <dbReference type="ChEBI" id="CHEBI:43474"/>
        <dbReference type="ChEBI" id="CHEBI:138881"/>
    </reaction>
    <physiologicalReaction direction="left-to-right" evidence="1">
        <dbReference type="Rhea" id="RHEA:35604"/>
    </physiologicalReaction>
</comment>
<comment type="catalytic activity">
    <reaction evidence="1">
        <text>glycerol 2-phosphate + H2O = glycerol + phosphate</text>
        <dbReference type="Rhea" id="RHEA:13105"/>
        <dbReference type="ChEBI" id="CHEBI:15377"/>
        <dbReference type="ChEBI" id="CHEBI:17754"/>
        <dbReference type="ChEBI" id="CHEBI:43474"/>
        <dbReference type="ChEBI" id="CHEBI:58083"/>
    </reaction>
    <physiologicalReaction direction="left-to-right" evidence="1">
        <dbReference type="Rhea" id="RHEA:13106"/>
    </physiologicalReaction>
</comment>
<comment type="catalytic activity">
    <reaction evidence="1">
        <text>adenosine 2'-phosphate + H2O = adenosine + phosphate</text>
        <dbReference type="Rhea" id="RHEA:37343"/>
        <dbReference type="ChEBI" id="CHEBI:15377"/>
        <dbReference type="ChEBI" id="CHEBI:16335"/>
        <dbReference type="ChEBI" id="CHEBI:43474"/>
        <dbReference type="ChEBI" id="CHEBI:77740"/>
    </reaction>
    <physiologicalReaction direction="left-to-right" evidence="1">
        <dbReference type="Rhea" id="RHEA:37344"/>
    </physiologicalReaction>
</comment>
<comment type="cofactor">
    <cofactor evidence="3 4">
        <name>Mg(2+)</name>
        <dbReference type="ChEBI" id="CHEBI:18420"/>
    </cofactor>
</comment>
<comment type="activity regulation">
    <text evidence="3">Activity with myo-inositol monophosphate and D-galactose 1-phosphate is inhibited by Li(+), Ca(2+) and Mn(2+), but also by Mg(2+) at concentrations above 3 mM.</text>
</comment>
<comment type="pathway">
    <text>Polyol metabolism; myo-inositol biosynthesis; myo-inositol from D-glucose 6-phosphate: step 2/2.</text>
</comment>
<comment type="subunit">
    <text evidence="2 3">Homodimer.</text>
</comment>
<comment type="subcellular location">
    <subcellularLocation>
        <location evidence="1">Cytoplasm</location>
    </subcellularLocation>
</comment>
<comment type="PTM">
    <text>The N-terminus is blocked.</text>
</comment>
<comment type="similarity">
    <text evidence="6">Belongs to the inositol monophosphatase superfamily.</text>
</comment>
<name>IMPA1_BOVIN</name>